<dbReference type="EMBL" id="AC069471">
    <property type="protein sequence ID" value="AAG51485.1"/>
    <property type="molecule type" value="Genomic_DNA"/>
</dbReference>
<dbReference type="EMBL" id="CP002684">
    <property type="protein sequence ID" value="AEE30894.1"/>
    <property type="molecule type" value="Genomic_DNA"/>
</dbReference>
<dbReference type="EMBL" id="AY092956">
    <property type="protein sequence ID" value="AAM12955.1"/>
    <property type="molecule type" value="mRNA"/>
</dbReference>
<dbReference type="EMBL" id="AY128712">
    <property type="protein sequence ID" value="AAM91112.1"/>
    <property type="molecule type" value="mRNA"/>
</dbReference>
<dbReference type="EMBL" id="AY085407">
    <property type="protein sequence ID" value="AAM62634.1"/>
    <property type="molecule type" value="mRNA"/>
</dbReference>
<dbReference type="EMBL" id="AK220681">
    <property type="protein sequence ID" value="BAD93740.1"/>
    <property type="molecule type" value="mRNA"/>
</dbReference>
<dbReference type="PIR" id="H86404">
    <property type="entry name" value="H86404"/>
</dbReference>
<dbReference type="RefSeq" id="NP_174116.1">
    <property type="nucleotide sequence ID" value="NM_102560.3"/>
</dbReference>
<dbReference type="SMR" id="Q9C7F7"/>
<dbReference type="FunCoup" id="Q9C7F7">
    <property type="interactions" value="188"/>
</dbReference>
<dbReference type="STRING" id="3702.Q9C7F7"/>
<dbReference type="GlyCosmos" id="Q9C7F7">
    <property type="glycosylation" value="2 sites, No reported glycans"/>
</dbReference>
<dbReference type="GlyGen" id="Q9C7F7">
    <property type="glycosylation" value="3 sites"/>
</dbReference>
<dbReference type="SwissPalm" id="Q9C7F7"/>
<dbReference type="PaxDb" id="3702-AT1G27950.1"/>
<dbReference type="ProteomicsDB" id="238639"/>
<dbReference type="EnsemblPlants" id="AT1G27950.1">
    <property type="protein sequence ID" value="AT1G27950.1"/>
    <property type="gene ID" value="AT1G27950"/>
</dbReference>
<dbReference type="GeneID" id="839688"/>
<dbReference type="Gramene" id="AT1G27950.1">
    <property type="protein sequence ID" value="AT1G27950.1"/>
    <property type="gene ID" value="AT1G27950"/>
</dbReference>
<dbReference type="KEGG" id="ath:AT1G27950"/>
<dbReference type="Araport" id="AT1G27950"/>
<dbReference type="TAIR" id="AT1G27950">
    <property type="gene designation" value="LTPG1"/>
</dbReference>
<dbReference type="eggNOG" id="ENOG502S13V">
    <property type="taxonomic scope" value="Eukaryota"/>
</dbReference>
<dbReference type="HOGENOM" id="CLU_089796_2_0_1"/>
<dbReference type="InParanoid" id="Q9C7F7"/>
<dbReference type="OMA" id="NASISEC"/>
<dbReference type="PhylomeDB" id="Q9C7F7"/>
<dbReference type="PRO" id="PR:Q9C7F7"/>
<dbReference type="Proteomes" id="UP000006548">
    <property type="component" value="Chromosome 1"/>
</dbReference>
<dbReference type="ExpressionAtlas" id="Q9C7F7">
    <property type="expression patterns" value="baseline and differential"/>
</dbReference>
<dbReference type="GO" id="GO:0005783">
    <property type="term" value="C:endoplasmic reticulum"/>
    <property type="evidence" value="ECO:0000314"/>
    <property type="project" value="UniProtKB"/>
</dbReference>
<dbReference type="GO" id="GO:0005576">
    <property type="term" value="C:extracellular region"/>
    <property type="evidence" value="ECO:0007669"/>
    <property type="project" value="UniProtKB-KW"/>
</dbReference>
<dbReference type="GO" id="GO:0005794">
    <property type="term" value="C:Golgi apparatus"/>
    <property type="evidence" value="ECO:0007669"/>
    <property type="project" value="UniProtKB-SubCell"/>
</dbReference>
<dbReference type="GO" id="GO:0005634">
    <property type="term" value="C:nucleus"/>
    <property type="evidence" value="ECO:0007005"/>
    <property type="project" value="TAIR"/>
</dbReference>
<dbReference type="GO" id="GO:0009505">
    <property type="term" value="C:plant-type cell wall"/>
    <property type="evidence" value="ECO:0000314"/>
    <property type="project" value="UniProtKB"/>
</dbReference>
<dbReference type="GO" id="GO:0005886">
    <property type="term" value="C:plasma membrane"/>
    <property type="evidence" value="ECO:0000314"/>
    <property type="project" value="UniProtKB"/>
</dbReference>
<dbReference type="GO" id="GO:0099503">
    <property type="term" value="C:secretory vesicle"/>
    <property type="evidence" value="ECO:0007005"/>
    <property type="project" value="TAIR"/>
</dbReference>
<dbReference type="GO" id="GO:0098552">
    <property type="term" value="C:side of membrane"/>
    <property type="evidence" value="ECO:0007669"/>
    <property type="project" value="UniProtKB-KW"/>
</dbReference>
<dbReference type="GO" id="GO:0008289">
    <property type="term" value="F:lipid binding"/>
    <property type="evidence" value="ECO:0000314"/>
    <property type="project" value="UniProtKB"/>
</dbReference>
<dbReference type="GO" id="GO:0042335">
    <property type="term" value="P:cuticle development"/>
    <property type="evidence" value="ECO:0000315"/>
    <property type="project" value="UniProtKB"/>
</dbReference>
<dbReference type="GO" id="GO:0050832">
    <property type="term" value="P:defense response to fungus"/>
    <property type="evidence" value="ECO:0000315"/>
    <property type="project" value="UniProtKB"/>
</dbReference>
<dbReference type="GO" id="GO:0006869">
    <property type="term" value="P:lipid transport"/>
    <property type="evidence" value="ECO:0000315"/>
    <property type="project" value="UniProtKB"/>
</dbReference>
<dbReference type="CDD" id="cd00010">
    <property type="entry name" value="AAI_LTSS"/>
    <property type="match status" value="1"/>
</dbReference>
<dbReference type="Gene3D" id="1.10.110.10">
    <property type="entry name" value="Plant lipid-transfer and hydrophobic proteins"/>
    <property type="match status" value="1"/>
</dbReference>
<dbReference type="InterPro" id="IPR036312">
    <property type="entry name" value="Bifun_inhib/LTP/seed_sf"/>
</dbReference>
<dbReference type="InterPro" id="IPR016140">
    <property type="entry name" value="Bifunc_inhib/LTP/seed_store"/>
</dbReference>
<dbReference type="InterPro" id="IPR043325">
    <property type="entry name" value="LTSS"/>
</dbReference>
<dbReference type="PANTHER" id="PTHR33044">
    <property type="entry name" value="BIFUNCTIONAL INHIBITOR/LIPID-TRANSFER PROTEIN/SEED STORAGE 2S ALBUMIN SUPERFAMILY PROTEIN-RELATED"/>
    <property type="match status" value="1"/>
</dbReference>
<dbReference type="Pfam" id="PF14368">
    <property type="entry name" value="LTP_2"/>
    <property type="match status" value="1"/>
</dbReference>
<dbReference type="SMART" id="SM00499">
    <property type="entry name" value="AAI"/>
    <property type="match status" value="1"/>
</dbReference>
<dbReference type="SUPFAM" id="SSF47699">
    <property type="entry name" value="Bifunctional inhibitor/lipid-transfer protein/seed storage 2S albumin"/>
    <property type="match status" value="1"/>
</dbReference>
<organism>
    <name type="scientific">Arabidopsis thaliana</name>
    <name type="common">Mouse-ear cress</name>
    <dbReference type="NCBI Taxonomy" id="3702"/>
    <lineage>
        <taxon>Eukaryota</taxon>
        <taxon>Viridiplantae</taxon>
        <taxon>Streptophyta</taxon>
        <taxon>Embryophyta</taxon>
        <taxon>Tracheophyta</taxon>
        <taxon>Spermatophyta</taxon>
        <taxon>Magnoliopsida</taxon>
        <taxon>eudicotyledons</taxon>
        <taxon>Gunneridae</taxon>
        <taxon>Pentapetalae</taxon>
        <taxon>rosids</taxon>
        <taxon>malvids</taxon>
        <taxon>Brassicales</taxon>
        <taxon>Brassicaceae</taxon>
        <taxon>Camelineae</taxon>
        <taxon>Arabidopsis</taxon>
    </lineage>
</organism>
<name>LTPG1_ARATH</name>
<feature type="signal peptide" evidence="4">
    <location>
        <begin position="1"/>
        <end position="22"/>
    </location>
</feature>
<feature type="chain" id="PRO_0000022623" description="Non-specific lipid transfer protein GPI-anchored 1">
    <location>
        <begin position="23"/>
        <end position="165"/>
    </location>
</feature>
<feature type="propeptide" id="PRO_0000022624" description="Removed in mature form" evidence="4">
    <location>
        <begin position="166"/>
        <end position="193"/>
    </location>
</feature>
<feature type="region of interest" description="Disordered" evidence="6">
    <location>
        <begin position="138"/>
        <end position="161"/>
    </location>
</feature>
<feature type="lipid moiety-binding region" description="GPI-anchor amidated aspartate" evidence="4">
    <location>
        <position position="165"/>
    </location>
</feature>
<feature type="glycosylation site" description="N-linked (GlcNAc...) asparagine" evidence="5">
    <location>
        <position position="110"/>
    </location>
</feature>
<feature type="glycosylation site" description="N-linked (GlcNAc...) asparagine" evidence="5">
    <location>
        <position position="135"/>
    </location>
</feature>
<feature type="disulfide bond" evidence="2">
    <location>
        <begin position="35"/>
        <end position="76"/>
    </location>
</feature>
<feature type="disulfide bond" evidence="2">
    <location>
        <begin position="45"/>
        <end position="60"/>
    </location>
</feature>
<feature type="disulfide bond" evidence="2">
    <location>
        <begin position="61"/>
        <end position="106"/>
    </location>
</feature>
<feature type="disulfide bond" evidence="2">
    <location>
        <begin position="74"/>
        <end position="116"/>
    </location>
</feature>
<feature type="sequence conflict" description="In Ref. 4; AAM62634." evidence="18" ref="4">
    <original>I</original>
    <variation>T</variation>
    <location>
        <position position="55"/>
    </location>
</feature>
<keyword id="KW-1003">Cell membrane</keyword>
<keyword id="KW-0134">Cell wall</keyword>
<keyword id="KW-1015">Disulfide bond</keyword>
<keyword id="KW-0256">Endoplasmic reticulum</keyword>
<keyword id="KW-0325">Glycoprotein</keyword>
<keyword id="KW-0333">Golgi apparatus</keyword>
<keyword id="KW-0336">GPI-anchor</keyword>
<keyword id="KW-0446">Lipid-binding</keyword>
<keyword id="KW-0449">Lipoprotein</keyword>
<keyword id="KW-0472">Membrane</keyword>
<keyword id="KW-0611">Plant defense</keyword>
<keyword id="KW-1185">Reference proteome</keyword>
<keyword id="KW-0964">Secreted</keyword>
<keyword id="KW-0732">Signal</keyword>
<comment type="function">
    <text evidence="3 8 9 10 13">Lipid transfer protein that, together with LTPG2, binds to lipids and functions as a component of the cuticular lipid export machinery that performs extensive export of intracellular lipids (e.g. C29 alkane) from epidermal cells to the surface to build the cuticular wax layer and silique walls. Involved in the establishment of resistance to the necrotrophic fungal pathogen Alternaria brassicicola. Contributes to pre-invasive defense against some non-host powdery mildew pathogens by preventing the penetration of the epidermal cell wall by the fungal agents (e.g. Blumeria graminis f. sp. hordei (Bgh)) (PubMed:30102837). Maybe involved in seed and ovule maturation and development, probably by regulating the fatty acids homeostasis during suberin and sporopollenin biosynthesis or deposition (By similarity).</text>
</comment>
<comment type="subcellular location">
    <subcellularLocation>
        <location evidence="8 10 11">Cell membrane</location>
        <topology evidence="4">Lipid-anchor</topology>
        <topology evidence="4">GPI-anchor</topology>
    </subcellularLocation>
    <subcellularLocation>
        <location evidence="9">Secreted</location>
        <location evidence="9">Cell wall</location>
    </subcellularLocation>
    <subcellularLocation>
        <location evidence="9">Endoplasmic reticulum</location>
    </subcellularLocation>
    <subcellularLocation>
        <location evidence="9">Golgi apparatus</location>
    </subcellularLocation>
    <text evidence="8 9 10 13">Targeted to the plasma membrane via the vesicular trafficking system (PubMed:19321705, PubMed:22891199). Localized to the plasma membrane on all faces of epidermal cells (PubMed:19366900). Also detected in the periclinal cell wall (PubMed:19366900). In young meristematic cells, observed in plasma membrane and in puncta resembling the Golgi (PubMed:19366900). Localized to papillae at the sites of Blumeria graminis f. sp. hordei (Bgh) penetration (Bgh) (PubMed:30102837).</text>
</comment>
<comment type="tissue specificity">
    <text evidence="7 8 12">Up-regulated in the epidermis of stems and leaves. Expressed in the epidermis, stem cortex, vascular bundles and mesophyll cells in root tips, cotyledons, seedlings, leaves, caulines, flowers, siliques, pollen, and early-developing seeds.</text>
</comment>
<comment type="developmental stage">
    <text evidence="8 9 12">Accumulates in seeds after imbibition (PubMed:23893219). High levels in the aerial portion of 10 days old seedlings. Accumulates in the epidermis during cuticle biosynthesis (e.g. in inflorescence stems). Also detected in flowers, in upper portion of the styles, pollen, veins of the sepals and petals, silique walls and seeds in the early stages of development (PubMed:23893219). In epidermis, present in trichomes, leaf mesophyll cells, and stem cortex and xylem.</text>
</comment>
<comment type="PTM">
    <text evidence="1">O-glycosylated on hydroxyprolines; noncontiguous hydroxylproline residues are glycosylated with arabinogalactan.</text>
</comment>
<comment type="disruption phenotype">
    <text evidence="8 9 10 13">Reduced cuticular wax load on the stem surface and in silique walls, with altered cuticular lipid composition (especially C29 alkane) associated with diffuse cuticular layer structure. Increased number of plastoglobules in the stem cortex and leaf mesophyll cells, protrusions of the cytoplasm into the vacuole in the epidermis, and enhanced susceptibility to infection by the necrotrophic fungal pathogen Alternaria brassicicola. Increased susceptibility to penetration of the epidermal cell wall by the non-host mildew fungal agent Blumeria graminis f. sp. hordei (Bgh) (PubMed:30102837).</text>
</comment>
<comment type="similarity">
    <text evidence="18">Belongs to the plant LTP family.</text>
</comment>
<gene>
    <name evidence="14 16 17" type="primary">LTPG1</name>
    <name evidence="15" type="synonym">LTPG</name>
    <name evidence="19" type="ordered locus">At1g27950</name>
    <name evidence="20" type="ORF">F13K9.6</name>
</gene>
<accession>Q9C7F7</accession>
<accession>Q570M7</accession>
<accession>Q8LEI0</accession>
<reference key="1">
    <citation type="journal article" date="2000" name="Nature">
        <title>Sequence and analysis of chromosome 1 of the plant Arabidopsis thaliana.</title>
        <authorList>
            <person name="Theologis A."/>
            <person name="Ecker J.R."/>
            <person name="Palm C.J."/>
            <person name="Federspiel N.A."/>
            <person name="Kaul S."/>
            <person name="White O."/>
            <person name="Alonso J."/>
            <person name="Altafi H."/>
            <person name="Araujo R."/>
            <person name="Bowman C.L."/>
            <person name="Brooks S.Y."/>
            <person name="Buehler E."/>
            <person name="Chan A."/>
            <person name="Chao Q."/>
            <person name="Chen H."/>
            <person name="Cheuk R.F."/>
            <person name="Chin C.W."/>
            <person name="Chung M.K."/>
            <person name="Conn L."/>
            <person name="Conway A.B."/>
            <person name="Conway A.R."/>
            <person name="Creasy T.H."/>
            <person name="Dewar K."/>
            <person name="Dunn P."/>
            <person name="Etgu P."/>
            <person name="Feldblyum T.V."/>
            <person name="Feng J.-D."/>
            <person name="Fong B."/>
            <person name="Fujii C.Y."/>
            <person name="Gill J.E."/>
            <person name="Goldsmith A.D."/>
            <person name="Haas B."/>
            <person name="Hansen N.F."/>
            <person name="Hughes B."/>
            <person name="Huizar L."/>
            <person name="Hunter J.L."/>
            <person name="Jenkins J."/>
            <person name="Johnson-Hopson C."/>
            <person name="Khan S."/>
            <person name="Khaykin E."/>
            <person name="Kim C.J."/>
            <person name="Koo H.L."/>
            <person name="Kremenetskaia I."/>
            <person name="Kurtz D.B."/>
            <person name="Kwan A."/>
            <person name="Lam B."/>
            <person name="Langin-Hooper S."/>
            <person name="Lee A."/>
            <person name="Lee J.M."/>
            <person name="Lenz C.A."/>
            <person name="Li J.H."/>
            <person name="Li Y.-P."/>
            <person name="Lin X."/>
            <person name="Liu S.X."/>
            <person name="Liu Z.A."/>
            <person name="Luros J.S."/>
            <person name="Maiti R."/>
            <person name="Marziali A."/>
            <person name="Militscher J."/>
            <person name="Miranda M."/>
            <person name="Nguyen M."/>
            <person name="Nierman W.C."/>
            <person name="Osborne B.I."/>
            <person name="Pai G."/>
            <person name="Peterson J."/>
            <person name="Pham P.K."/>
            <person name="Rizzo M."/>
            <person name="Rooney T."/>
            <person name="Rowley D."/>
            <person name="Sakano H."/>
            <person name="Salzberg S.L."/>
            <person name="Schwartz J.R."/>
            <person name="Shinn P."/>
            <person name="Southwick A.M."/>
            <person name="Sun H."/>
            <person name="Tallon L.J."/>
            <person name="Tambunga G."/>
            <person name="Toriumi M.J."/>
            <person name="Town C.D."/>
            <person name="Utterback T."/>
            <person name="Van Aken S."/>
            <person name="Vaysberg M."/>
            <person name="Vysotskaia V.S."/>
            <person name="Walker M."/>
            <person name="Wu D."/>
            <person name="Yu G."/>
            <person name="Fraser C.M."/>
            <person name="Venter J.C."/>
            <person name="Davis R.W."/>
        </authorList>
    </citation>
    <scope>NUCLEOTIDE SEQUENCE [LARGE SCALE GENOMIC DNA]</scope>
    <source>
        <strain>cv. Columbia</strain>
    </source>
</reference>
<reference key="2">
    <citation type="journal article" date="2017" name="Plant J.">
        <title>Araport11: a complete reannotation of the Arabidopsis thaliana reference genome.</title>
        <authorList>
            <person name="Cheng C.Y."/>
            <person name="Krishnakumar V."/>
            <person name="Chan A.P."/>
            <person name="Thibaud-Nissen F."/>
            <person name="Schobel S."/>
            <person name="Town C.D."/>
        </authorList>
    </citation>
    <scope>GENOME REANNOTATION</scope>
    <source>
        <strain>cv. Columbia</strain>
    </source>
</reference>
<reference key="3">
    <citation type="journal article" date="2003" name="Science">
        <title>Empirical analysis of transcriptional activity in the Arabidopsis genome.</title>
        <authorList>
            <person name="Yamada K."/>
            <person name="Lim J."/>
            <person name="Dale J.M."/>
            <person name="Chen H."/>
            <person name="Shinn P."/>
            <person name="Palm C.J."/>
            <person name="Southwick A.M."/>
            <person name="Wu H.C."/>
            <person name="Kim C.J."/>
            <person name="Nguyen M."/>
            <person name="Pham P.K."/>
            <person name="Cheuk R.F."/>
            <person name="Karlin-Newmann G."/>
            <person name="Liu S.X."/>
            <person name="Lam B."/>
            <person name="Sakano H."/>
            <person name="Wu T."/>
            <person name="Yu G."/>
            <person name="Miranda M."/>
            <person name="Quach H.L."/>
            <person name="Tripp M."/>
            <person name="Chang C.H."/>
            <person name="Lee J.M."/>
            <person name="Toriumi M.J."/>
            <person name="Chan M.M."/>
            <person name="Tang C.C."/>
            <person name="Onodera C.S."/>
            <person name="Deng J.M."/>
            <person name="Akiyama K."/>
            <person name="Ansari Y."/>
            <person name="Arakawa T."/>
            <person name="Banh J."/>
            <person name="Banno F."/>
            <person name="Bowser L."/>
            <person name="Brooks S.Y."/>
            <person name="Carninci P."/>
            <person name="Chao Q."/>
            <person name="Choy N."/>
            <person name="Enju A."/>
            <person name="Goldsmith A.D."/>
            <person name="Gurjal M."/>
            <person name="Hansen N.F."/>
            <person name="Hayashizaki Y."/>
            <person name="Johnson-Hopson C."/>
            <person name="Hsuan V.W."/>
            <person name="Iida K."/>
            <person name="Karnes M."/>
            <person name="Khan S."/>
            <person name="Koesema E."/>
            <person name="Ishida J."/>
            <person name="Jiang P.X."/>
            <person name="Jones T."/>
            <person name="Kawai J."/>
            <person name="Kamiya A."/>
            <person name="Meyers C."/>
            <person name="Nakajima M."/>
            <person name="Narusaka M."/>
            <person name="Seki M."/>
            <person name="Sakurai T."/>
            <person name="Satou M."/>
            <person name="Tamse R."/>
            <person name="Vaysberg M."/>
            <person name="Wallender E.K."/>
            <person name="Wong C."/>
            <person name="Yamamura Y."/>
            <person name="Yuan S."/>
            <person name="Shinozaki K."/>
            <person name="Davis R.W."/>
            <person name="Theologis A."/>
            <person name="Ecker J.R."/>
        </authorList>
    </citation>
    <scope>NUCLEOTIDE SEQUENCE [LARGE SCALE MRNA]</scope>
    <source>
        <strain>cv. Columbia</strain>
    </source>
</reference>
<reference key="4">
    <citation type="submission" date="2002-03" db="EMBL/GenBank/DDBJ databases">
        <title>Full-length cDNA from Arabidopsis thaliana.</title>
        <authorList>
            <person name="Brover V.V."/>
            <person name="Troukhan M.E."/>
            <person name="Alexandrov N.A."/>
            <person name="Lu Y.-P."/>
            <person name="Flavell R.B."/>
            <person name="Feldmann K.A."/>
        </authorList>
    </citation>
    <scope>NUCLEOTIDE SEQUENCE [LARGE SCALE MRNA]</scope>
</reference>
<reference key="5">
    <citation type="submission" date="2005-03" db="EMBL/GenBank/DDBJ databases">
        <title>Large-scale analysis of RIKEN Arabidopsis full-length (RAFL) cDNAs.</title>
        <authorList>
            <person name="Totoki Y."/>
            <person name="Seki M."/>
            <person name="Ishida J."/>
            <person name="Nakajima M."/>
            <person name="Enju A."/>
            <person name="Kamiya A."/>
            <person name="Narusaka M."/>
            <person name="Shin-i T."/>
            <person name="Nakagawa M."/>
            <person name="Sakamoto N."/>
            <person name="Oishi K."/>
            <person name="Kohara Y."/>
            <person name="Kobayashi M."/>
            <person name="Toyoda A."/>
            <person name="Sakaki Y."/>
            <person name="Sakurai T."/>
            <person name="Iida K."/>
            <person name="Akiyama K."/>
            <person name="Satou M."/>
            <person name="Toyoda T."/>
            <person name="Konagaya A."/>
            <person name="Carninci P."/>
            <person name="Kawai J."/>
            <person name="Hayashizaki Y."/>
            <person name="Shinozaki K."/>
        </authorList>
    </citation>
    <scope>NUCLEOTIDE SEQUENCE [LARGE SCALE MRNA] OF 127-193</scope>
    <source>
        <strain>cv. Columbia</strain>
    </source>
</reference>
<reference key="6">
    <citation type="journal article" date="2005" name="Plant Physiol.">
        <title>Cuticular lipid composition, surface structure, and gene expression in Arabidopsis stem epidermis.</title>
        <authorList>
            <person name="Suh M.C."/>
            <person name="Samuels A.L."/>
            <person name="Jetter R."/>
            <person name="Kunst L."/>
            <person name="Pollard M."/>
            <person name="Ohlrogge J."/>
            <person name="Beisson F."/>
        </authorList>
    </citation>
    <scope>TISSUE SPECIFICITY</scope>
</reference>
<reference key="7">
    <citation type="journal article" date="2009" name="Plant Cell">
        <title>Arabidopsis LTPG is a glycosylphosphatidylinositol-anchored lipid transfer protein required for export of lipids to the plant surface.</title>
        <authorList>
            <person name="Debono A."/>
            <person name="Yeats T.H."/>
            <person name="Rose J.K."/>
            <person name="Bird D."/>
            <person name="Jetter R."/>
            <person name="Kunst L."/>
            <person name="Samuels L."/>
        </authorList>
    </citation>
    <scope>FUNCTION</scope>
    <scope>DISRUPTION PHENOTYPE</scope>
    <scope>DEVELOPMENTAL STAGE</scope>
    <scope>SUBCELLULAR LOCATION</scope>
    <source>
        <strain>cv. Columbia</strain>
    </source>
</reference>
<reference key="8">
    <citation type="journal article" date="2009" name="Plant Physiol.">
        <title>Disruption of glycosylphosphatidylinositol-anchored lipid transfer protein gene altered cuticular lipid composition, increased plastoglobules, and enhanced susceptibility to infection by the fungal pathogen Alternaria brassicicola.</title>
        <authorList>
            <person name="Lee S.B."/>
            <person name="Go Y.S."/>
            <person name="Bae H.J."/>
            <person name="Park J.H."/>
            <person name="Cho S.H."/>
            <person name="Cho H.J."/>
            <person name="Lee D.S."/>
            <person name="Park O.K."/>
            <person name="Hwang I."/>
            <person name="Suh M.C."/>
        </authorList>
    </citation>
    <scope>FUNCTION</scope>
    <scope>DISRUPTION PHENOTYPE</scope>
    <scope>TISSUE SPECIFICITY</scope>
    <scope>SUBCELLULAR LOCATION</scope>
    <scope>DEVELOPMENTAL STAGE</scope>
    <source>
        <strain>cv. Columbia</strain>
    </source>
</reference>
<reference key="9">
    <citation type="journal article" date="2012" name="Plant Cell Physiol.">
        <title>Characterization of glycosylphosphatidylinositol-anchored lipid transfer protein 2 (LTPG2) and overlapping function between LTPG/LTPG1 and LTPG2 in cuticular wax export or accumulation in Arabidopsis thaliana.</title>
        <authorList>
            <person name="Kim H."/>
            <person name="Lee S.B."/>
            <person name="Kim H.J."/>
            <person name="Min M.K."/>
            <person name="Hwang I."/>
            <person name="Suh M.C."/>
        </authorList>
    </citation>
    <scope>FUNCTION</scope>
    <scope>DISRUPTION PHENOTYPE</scope>
    <scope>SUBCELLULAR LOCATION</scope>
    <source>
        <strain>cv. Columbia</strain>
    </source>
</reference>
<reference key="10">
    <citation type="journal article" date="2013" name="Arabidopsis Book">
        <title>Acyl-lipid metabolism.</title>
        <authorList>
            <person name="Li-Beisson Y."/>
            <person name="Shorrosh B."/>
            <person name="Beisson F."/>
            <person name="Andersson M.X."/>
            <person name="Arondel V."/>
            <person name="Bates P.D."/>
            <person name="Baud S."/>
            <person name="Bird D."/>
            <person name="Debono A."/>
            <person name="Durrett T.P."/>
            <person name="Franke R.B."/>
            <person name="Graham I.A."/>
            <person name="Katayama K."/>
            <person name="Kelly A.A."/>
            <person name="Larson T."/>
            <person name="Markham J.E."/>
            <person name="Miquel M."/>
            <person name="Molina I."/>
            <person name="Nishida I."/>
            <person name="Rowland O."/>
            <person name="Samuels L."/>
            <person name="Schmid K.M."/>
            <person name="Wada H."/>
            <person name="Welti R."/>
            <person name="Xu C."/>
            <person name="Zallot R."/>
            <person name="Ohlrogge J."/>
        </authorList>
    </citation>
    <scope>SUBCELLULAR LOCATION</scope>
    <scope>REVIEW</scope>
</reference>
<reference key="11">
    <citation type="journal article" date="2013" name="Plant Mol. Biol.">
        <title>Coexpression patterns indicate that GPI-anchored non-specific lipid transfer proteins are involved in accumulation of cuticular wax, suberin and sporopollenin.</title>
        <authorList>
            <person name="Edstam M.M."/>
            <person name="Blomqvist K."/>
            <person name="Ekloef A."/>
            <person name="Wennergren U."/>
            <person name="Edqvist J."/>
        </authorList>
    </citation>
    <scope>TISSUE SPECIFICITY</scope>
    <scope>DEVELOPMENTAL STAGE</scope>
    <scope>GENE FAMILY</scope>
    <scope>NOMENCLATURE</scope>
    <source>
        <strain>cv. Columbia</strain>
    </source>
</reference>
<reference key="12">
    <citation type="journal article" date="2014" name="Physiol. Plantarum">
        <title>Involvement of GPI-anchored lipid transfer proteins in the development of seed coats and pollen in Arabidopsis thaliana.</title>
        <authorList>
            <person name="Edstam M.M."/>
            <person name="Edqvist J."/>
        </authorList>
    </citation>
    <scope>GENE FAMILY</scope>
    <source>
        <strain>cv. Columbia</strain>
    </source>
</reference>
<reference key="13">
    <citation type="journal article" date="2019" name="Mol. Plant Pathol.">
        <title>Involvement of lipid transfer proteins in resistance against a non-host powdery mildew in Arabidopsis thaliana.</title>
        <authorList>
            <person name="Fahlberg P."/>
            <person name="Buhot N."/>
            <person name="Johansson O.N."/>
            <person name="Andersson M.X."/>
        </authorList>
    </citation>
    <scope>FUNCTION</scope>
    <scope>DISRUPTION PHENOTYPE</scope>
    <scope>SUBCELLULAR LOCATION</scope>
    <scope>GENE FAMILY</scope>
    <scope>NOMENCLATURE</scope>
    <source>
        <strain>cv. Columbia</strain>
    </source>
</reference>
<sequence>MKGLHLHLVLVTMTIVASIAAAAPAAPGGALADECNQDFQKVTLCLDFATGKATIPSKKCCDAVEDIKERDPKCLCFVIQQAKTGGQALKDLGVQEDKLIQLPTSCQLHNASITNCPKLLGISPSSPDAAVFTNNATTTPVAPAGKSPATPATSTDKGGSASAKDGHAVVALAVALMAVSFVLTLPRHVTLGM</sequence>
<protein>
    <recommendedName>
        <fullName evidence="14 15 17">Non-specific lipid transfer protein GPI-anchored 1</fullName>
        <shortName evidence="14 15 17">AtLTPG-1</shortName>
        <shortName evidence="14 15 17">Protein LTP-GPI-ANCHORED 1</shortName>
    </recommendedName>
</protein>
<proteinExistence type="evidence at transcript level"/>
<evidence type="ECO:0000250" key="1"/>
<evidence type="ECO:0000250" key="2">
    <source>
        <dbReference type="UniProtKB" id="A0A0B4JDK1"/>
    </source>
</evidence>
<evidence type="ECO:0000250" key="3">
    <source>
        <dbReference type="UniProtKB" id="Q9LZH5"/>
    </source>
</evidence>
<evidence type="ECO:0000255" key="4"/>
<evidence type="ECO:0000255" key="5">
    <source>
        <dbReference type="PROSITE-ProRule" id="PRU00498"/>
    </source>
</evidence>
<evidence type="ECO:0000256" key="6">
    <source>
        <dbReference type="SAM" id="MobiDB-lite"/>
    </source>
</evidence>
<evidence type="ECO:0000269" key="7">
    <source>
    </source>
</evidence>
<evidence type="ECO:0000269" key="8">
    <source>
    </source>
</evidence>
<evidence type="ECO:0000269" key="9">
    <source>
    </source>
</evidence>
<evidence type="ECO:0000269" key="10">
    <source>
    </source>
</evidence>
<evidence type="ECO:0000269" key="11">
    <source>
    </source>
</evidence>
<evidence type="ECO:0000269" key="12">
    <source>
    </source>
</evidence>
<evidence type="ECO:0000269" key="13">
    <source>
    </source>
</evidence>
<evidence type="ECO:0000303" key="14">
    <source>
    </source>
</evidence>
<evidence type="ECO:0000303" key="15">
    <source>
    </source>
</evidence>
<evidence type="ECO:0000303" key="16">
    <source>
    </source>
</evidence>
<evidence type="ECO:0000303" key="17">
    <source>
    </source>
</evidence>
<evidence type="ECO:0000305" key="18"/>
<evidence type="ECO:0000312" key="19">
    <source>
        <dbReference type="Araport" id="AT1G27950"/>
    </source>
</evidence>
<evidence type="ECO:0000312" key="20">
    <source>
        <dbReference type="EMBL" id="AAG51485.1"/>
    </source>
</evidence>